<comment type="function">
    <text evidence="1 4">Delta subunit of the heteropentameric ligand-gated chloride channel gated by gamma-aminobutyric acid (GABA), a major inhibitory neurotransmitter in the brain (By similarity). GABA-gated chloride channels, also named GABA(A) receptors (GABAAR), consist of five subunits arranged around a central pore and contain GABA active binding site(s) located at the alpha and beta subunit interface(s) (By similarity). When activated by GABA, GABAARs selectively allow the flow of chloride anions across the cell membrane down their electrochemical gradient (By similarity). GABAARs containing delta/GABRD subunits are predominantly expressed and located in extrasynaptic or perisynaptic positions on hippocampus and cerebellar granule cells, and contribute to the tonic GABAergic inhibition (PubMed:9464994). GABAAR containing alpha-4-beta-3-delta subunits can simultaneously bind GABA and histamine where histamine binds at the interface of two neighboring beta subunits, which may be involved in the regulation of sleep and wakefulness (By similarity).</text>
</comment>
<comment type="catalytic activity">
    <reaction evidence="1">
        <text>chloride(in) = chloride(out)</text>
        <dbReference type="Rhea" id="RHEA:29823"/>
        <dbReference type="ChEBI" id="CHEBI:17996"/>
    </reaction>
</comment>
<comment type="subunit">
    <text evidence="1">Heteropentamer, formed by a combination of alpha (GABRA1-6), beta (GABRB1-3), gamma (GABRG1-3), delta (GABRD), epsilon (GABRE), rho (GABRR1-3), pi (GABRP) and theta (GABRQ) chains, each subunit exhibiting distinct physiological and pharmacological properties.</text>
</comment>
<comment type="subcellular location">
    <subcellularLocation>
        <location evidence="4">Cell membrane</location>
        <topology evidence="1">Multi-pass membrane protein</topology>
    </subcellularLocation>
    <text evidence="4">Delta subunits are found only on the extrasynaptic somatic and dendritic membranes.</text>
</comment>
<comment type="tissue specificity">
    <text evidence="3 4">Found in the brain, in cerebellar granule cells (PubMed:9464994). Expressed in lungs, in alveolar epithelium (PubMed:17003036).</text>
</comment>
<comment type="domain">
    <text evidence="1">GABAARs subunits share a common topological structure: a peptide sequence made up of a long extracellular N-terminal, four transmembrane domains, intracellular or cytoplasmic domain located between the third and the fourth transmembrane domains.</text>
</comment>
<comment type="similarity">
    <text evidence="5">Belongs to the ligand-gated ion channel (TC 1.A.9) family. Gamma-aminobutyric acid receptor (TC 1.A.9.5) subfamily. GABRD sub-subfamily.</text>
</comment>
<evidence type="ECO:0000250" key="1">
    <source>
        <dbReference type="UniProtKB" id="O14764"/>
    </source>
</evidence>
<evidence type="ECO:0000255" key="2"/>
<evidence type="ECO:0000269" key="3">
    <source>
    </source>
</evidence>
<evidence type="ECO:0000269" key="4">
    <source>
    </source>
</evidence>
<evidence type="ECO:0000305" key="5"/>
<evidence type="ECO:0000312" key="6">
    <source>
        <dbReference type="RGD" id="61901"/>
    </source>
</evidence>
<evidence type="ECO:0007744" key="7">
    <source>
    </source>
</evidence>
<dbReference type="EMBL" id="L08496">
    <property type="protein sequence ID" value="AAC42035.1"/>
    <property type="molecule type" value="Genomic_DNA"/>
</dbReference>
<dbReference type="EMBL" id="BC087714">
    <property type="protein sequence ID" value="AAH87714.1"/>
    <property type="molecule type" value="mRNA"/>
</dbReference>
<dbReference type="EMBL" id="M35162">
    <property type="protein sequence ID" value="AAA41182.1"/>
    <property type="molecule type" value="mRNA"/>
</dbReference>
<dbReference type="PIR" id="A34625">
    <property type="entry name" value="A34625"/>
</dbReference>
<dbReference type="RefSeq" id="NP_058985.1">
    <property type="nucleotide sequence ID" value="NM_017289.2"/>
</dbReference>
<dbReference type="SMR" id="P18506"/>
<dbReference type="ComplexPortal" id="CPX-280">
    <property type="entry name" value="GABA-A receptor, alpha-4/beta-3/delta"/>
</dbReference>
<dbReference type="ComplexPortal" id="CPX-406">
    <property type="entry name" value="GABA-A receptor, alpha6-beta3-delta"/>
</dbReference>
<dbReference type="ComplexPortal" id="CPX-407">
    <property type="entry name" value="GABA-A receptor, alpha6-beta2-delta"/>
</dbReference>
<dbReference type="ComplexPortal" id="CPX-408">
    <property type="entry name" value="GABA-A receptor, alpha4-beta2-delta"/>
</dbReference>
<dbReference type="CORUM" id="P18506"/>
<dbReference type="FunCoup" id="P18506">
    <property type="interactions" value="277"/>
</dbReference>
<dbReference type="IntAct" id="P18506">
    <property type="interactions" value="1"/>
</dbReference>
<dbReference type="STRING" id="10116.ENSRNOP00000022246"/>
<dbReference type="BindingDB" id="P18506"/>
<dbReference type="ChEMBL" id="CHEMBL4296050"/>
<dbReference type="ChEMBL" id="CHEMBL4296053"/>
<dbReference type="ChEMBL" id="CHEMBL4296056"/>
<dbReference type="ChEMBL" id="CHEMBL4296061"/>
<dbReference type="DrugCentral" id="P18506"/>
<dbReference type="GlyCosmos" id="P18506">
    <property type="glycosylation" value="2 sites, No reported glycans"/>
</dbReference>
<dbReference type="GlyGen" id="P18506">
    <property type="glycosylation" value="2 sites"/>
</dbReference>
<dbReference type="iPTMnet" id="P18506"/>
<dbReference type="PhosphoSitePlus" id="P18506"/>
<dbReference type="PaxDb" id="10116-ENSRNOP00000022246"/>
<dbReference type="ABCD" id="P18506">
    <property type="antibodies" value="1 sequenced antibody"/>
</dbReference>
<dbReference type="Ensembl" id="ENSRNOT00000022246.5">
    <property type="protein sequence ID" value="ENSRNOP00000022246.2"/>
    <property type="gene ID" value="ENSRNOG00000016385.5"/>
</dbReference>
<dbReference type="GeneID" id="29689"/>
<dbReference type="KEGG" id="rno:29689"/>
<dbReference type="AGR" id="RGD:61901"/>
<dbReference type="CTD" id="2563"/>
<dbReference type="RGD" id="61901">
    <property type="gene designation" value="Gabrd"/>
</dbReference>
<dbReference type="eggNOG" id="KOG3643">
    <property type="taxonomic scope" value="Eukaryota"/>
</dbReference>
<dbReference type="GeneTree" id="ENSGT00940000160122"/>
<dbReference type="HOGENOM" id="CLU_010920_0_1_1"/>
<dbReference type="InParanoid" id="P18506"/>
<dbReference type="OrthoDB" id="57979at9989"/>
<dbReference type="PhylomeDB" id="P18506"/>
<dbReference type="TreeFam" id="TF315453"/>
<dbReference type="PRO" id="PR:P18506"/>
<dbReference type="Proteomes" id="UP000002494">
    <property type="component" value="Chromosome 5"/>
</dbReference>
<dbReference type="Bgee" id="ENSRNOG00000016385">
    <property type="expression patterns" value="Expressed in frontal cortex and 4 other cell types or tissues"/>
</dbReference>
<dbReference type="GO" id="GO:0030424">
    <property type="term" value="C:axon"/>
    <property type="evidence" value="ECO:0000266"/>
    <property type="project" value="RGD"/>
</dbReference>
<dbReference type="GO" id="GO:0034707">
    <property type="term" value="C:chloride channel complex"/>
    <property type="evidence" value="ECO:0007669"/>
    <property type="project" value="UniProtKB-KW"/>
</dbReference>
<dbReference type="GO" id="GO:0030425">
    <property type="term" value="C:dendrite"/>
    <property type="evidence" value="ECO:0000266"/>
    <property type="project" value="RGD"/>
</dbReference>
<dbReference type="GO" id="GO:1902711">
    <property type="term" value="C:GABA-A receptor complex"/>
    <property type="evidence" value="ECO:0000353"/>
    <property type="project" value="ComplexPortal"/>
</dbReference>
<dbReference type="GO" id="GO:0098982">
    <property type="term" value="C:GABA-ergic synapse"/>
    <property type="evidence" value="ECO:0000314"/>
    <property type="project" value="SynGO"/>
</dbReference>
<dbReference type="GO" id="GO:0098978">
    <property type="term" value="C:glutamatergic synapse"/>
    <property type="evidence" value="ECO:0000314"/>
    <property type="project" value="SynGO"/>
</dbReference>
<dbReference type="GO" id="GO:0043025">
    <property type="term" value="C:neuronal cell body"/>
    <property type="evidence" value="ECO:0000266"/>
    <property type="project" value="RGD"/>
</dbReference>
<dbReference type="GO" id="GO:0005886">
    <property type="term" value="C:plasma membrane"/>
    <property type="evidence" value="ECO:0000314"/>
    <property type="project" value="UniProtKB"/>
</dbReference>
<dbReference type="GO" id="GO:0045211">
    <property type="term" value="C:postsynaptic membrane"/>
    <property type="evidence" value="ECO:0000314"/>
    <property type="project" value="SynGO"/>
</dbReference>
<dbReference type="GO" id="GO:0005254">
    <property type="term" value="F:chloride channel activity"/>
    <property type="evidence" value="ECO:0007669"/>
    <property type="project" value="UniProtKB-KW"/>
</dbReference>
<dbReference type="GO" id="GO:0004890">
    <property type="term" value="F:GABA-A receptor activity"/>
    <property type="evidence" value="ECO:0000314"/>
    <property type="project" value="RGD"/>
</dbReference>
<dbReference type="GO" id="GO:1904315">
    <property type="term" value="F:transmitter-gated monoatomic ion channel activity involved in regulation of postsynaptic membrane potential"/>
    <property type="evidence" value="ECO:0000266"/>
    <property type="project" value="RGD"/>
</dbReference>
<dbReference type="GO" id="GO:0007268">
    <property type="term" value="P:chemical synaptic transmission"/>
    <property type="evidence" value="ECO:0000314"/>
    <property type="project" value="RGD"/>
</dbReference>
<dbReference type="GO" id="GO:1902476">
    <property type="term" value="P:chloride transmembrane transport"/>
    <property type="evidence" value="ECO:0000266"/>
    <property type="project" value="RGD"/>
</dbReference>
<dbReference type="GO" id="GO:0007214">
    <property type="term" value="P:gamma-aminobutyric acid signaling pathway"/>
    <property type="evidence" value="ECO:0000266"/>
    <property type="project" value="RGD"/>
</dbReference>
<dbReference type="FunFam" id="1.20.58.390:FF:000015">
    <property type="entry name" value="Gamma-aminobutyric acid (GABA-A) receptor, subunit delta"/>
    <property type="match status" value="1"/>
</dbReference>
<dbReference type="FunFam" id="2.70.170.10:FF:000018">
    <property type="entry name" value="Gamma-aminobutyric acid (GABA-A) receptor, subunit delta"/>
    <property type="match status" value="1"/>
</dbReference>
<dbReference type="Gene3D" id="2.70.170.10">
    <property type="entry name" value="Neurotransmitter-gated ion-channel ligand-binding domain"/>
    <property type="match status" value="1"/>
</dbReference>
<dbReference type="Gene3D" id="1.20.58.390">
    <property type="entry name" value="Neurotransmitter-gated ion-channel transmembrane domain"/>
    <property type="match status" value="1"/>
</dbReference>
<dbReference type="InterPro" id="IPR006028">
    <property type="entry name" value="GABAA/Glycine_rcpt"/>
</dbReference>
<dbReference type="InterPro" id="IPR008098">
    <property type="entry name" value="GABAAd_rcpt"/>
</dbReference>
<dbReference type="InterPro" id="IPR006202">
    <property type="entry name" value="Neur_chan_lig-bd"/>
</dbReference>
<dbReference type="InterPro" id="IPR036734">
    <property type="entry name" value="Neur_chan_lig-bd_sf"/>
</dbReference>
<dbReference type="InterPro" id="IPR006201">
    <property type="entry name" value="Neur_channel"/>
</dbReference>
<dbReference type="InterPro" id="IPR036719">
    <property type="entry name" value="Neuro-gated_channel_TM_sf"/>
</dbReference>
<dbReference type="InterPro" id="IPR038050">
    <property type="entry name" value="Neuro_actylchol_rec"/>
</dbReference>
<dbReference type="InterPro" id="IPR006029">
    <property type="entry name" value="Neurotrans-gated_channel_TM"/>
</dbReference>
<dbReference type="InterPro" id="IPR018000">
    <property type="entry name" value="Neurotransmitter_ion_chnl_CS"/>
</dbReference>
<dbReference type="NCBIfam" id="TIGR00860">
    <property type="entry name" value="LIC"/>
    <property type="match status" value="1"/>
</dbReference>
<dbReference type="PANTHER" id="PTHR18945">
    <property type="entry name" value="NEUROTRANSMITTER GATED ION CHANNEL"/>
    <property type="match status" value="1"/>
</dbReference>
<dbReference type="Pfam" id="PF02931">
    <property type="entry name" value="Neur_chan_LBD"/>
    <property type="match status" value="1"/>
</dbReference>
<dbReference type="Pfam" id="PF02932">
    <property type="entry name" value="Neur_chan_memb"/>
    <property type="match status" value="1"/>
</dbReference>
<dbReference type="PRINTS" id="PR01722">
    <property type="entry name" value="GABAARDELTA"/>
</dbReference>
<dbReference type="PRINTS" id="PR00253">
    <property type="entry name" value="GABAARECEPTR"/>
</dbReference>
<dbReference type="PRINTS" id="PR00252">
    <property type="entry name" value="NRIONCHANNEL"/>
</dbReference>
<dbReference type="SUPFAM" id="SSF90112">
    <property type="entry name" value="Neurotransmitter-gated ion-channel transmembrane pore"/>
    <property type="match status" value="1"/>
</dbReference>
<dbReference type="SUPFAM" id="SSF63712">
    <property type="entry name" value="Nicotinic receptor ligand binding domain-like"/>
    <property type="match status" value="1"/>
</dbReference>
<dbReference type="PROSITE" id="PS00236">
    <property type="entry name" value="NEUROTR_ION_CHANNEL"/>
    <property type="match status" value="1"/>
</dbReference>
<organism>
    <name type="scientific">Rattus norvegicus</name>
    <name type="common">Rat</name>
    <dbReference type="NCBI Taxonomy" id="10116"/>
    <lineage>
        <taxon>Eukaryota</taxon>
        <taxon>Metazoa</taxon>
        <taxon>Chordata</taxon>
        <taxon>Craniata</taxon>
        <taxon>Vertebrata</taxon>
        <taxon>Euteleostomi</taxon>
        <taxon>Mammalia</taxon>
        <taxon>Eutheria</taxon>
        <taxon>Euarchontoglires</taxon>
        <taxon>Glires</taxon>
        <taxon>Rodentia</taxon>
        <taxon>Myomorpha</taxon>
        <taxon>Muroidea</taxon>
        <taxon>Muridae</taxon>
        <taxon>Murinae</taxon>
        <taxon>Rattus</taxon>
    </lineage>
</organism>
<accession>P18506</accession>
<name>GBRD_RAT</name>
<gene>
    <name evidence="6" type="primary">Gabrd</name>
</gene>
<protein>
    <recommendedName>
        <fullName evidence="1">Gamma-aminobutyric acid receptor subunit delta</fullName>
    </recommendedName>
    <alternativeName>
        <fullName>GABA(A) receptor subunit delta</fullName>
        <shortName evidence="1">GABAAR subunit delta</shortName>
    </alternativeName>
</protein>
<keyword id="KW-1003">Cell membrane</keyword>
<keyword id="KW-0868">Chloride</keyword>
<keyword id="KW-0869">Chloride channel</keyword>
<keyword id="KW-1015">Disulfide bond</keyword>
<keyword id="KW-0325">Glycoprotein</keyword>
<keyword id="KW-0407">Ion channel</keyword>
<keyword id="KW-0406">Ion transport</keyword>
<keyword id="KW-0472">Membrane</keyword>
<keyword id="KW-0597">Phosphoprotein</keyword>
<keyword id="KW-1185">Reference proteome</keyword>
<keyword id="KW-0732">Signal</keyword>
<keyword id="KW-0812">Transmembrane</keyword>
<keyword id="KW-1133">Transmembrane helix</keyword>
<keyword id="KW-0813">Transport</keyword>
<proteinExistence type="evidence at protein level"/>
<sequence length="449" mass="50566">MDVLGWLLLPLLLLCTQPHHGARAMNDIGDYVGSNLEISWLPNLDGLMEGYARNFRPGIGGPPVNVALALEVASIDHISEANMEYTMTVFLHQSWRDSRLSYNHTNETLGLDSRFVDKLWLPDTFIVNAKSAWFHDVTVENKLIRLQPDGVILYSIRITSTVACDMDLAKYPMDEQECMLDLESYGYSSEDIVYYWSENQEQIHGLDRLQLAQFTITSYRFTTELMNFKSAGQFPRLSLHFQLRRNRGVYIIQSYMPSVLLVAMSWVSFWISQAAVPARVSLGITTVLTMTTLMVSARSSLPRASAIKALDVYFWICYVFVFAALVEYAFAHFNADYRKKRKAKVKVTKPRAEMDVRNAIVLFSLSAAGVSQELAISRRQGRVPGNLMGSYRSVEVEAKKEGGSRPGGPGGIRSRLKPIDADTIDIYARAVFPAAFAAVNIIYWAAYTM</sequence>
<feature type="signal peptide" evidence="2">
    <location>
        <begin position="1"/>
        <end position="24"/>
    </location>
</feature>
<feature type="chain" id="PRO_0000000470" description="Gamma-aminobutyric acid receptor subunit delta">
    <location>
        <begin position="25"/>
        <end position="449"/>
    </location>
</feature>
<feature type="topological domain" description="Extracellular" evidence="5">
    <location>
        <begin position="25"/>
        <end position="251"/>
    </location>
</feature>
<feature type="transmembrane region" description="Helical" evidence="1">
    <location>
        <begin position="252"/>
        <end position="271"/>
    </location>
</feature>
<feature type="topological domain" description="Cytoplasmic" evidence="5">
    <location>
        <begin position="272"/>
        <end position="275"/>
    </location>
</feature>
<feature type="transmembrane region" description="Helical" evidence="1">
    <location>
        <begin position="276"/>
        <end position="298"/>
    </location>
</feature>
<feature type="topological domain" description="Extracellular" evidence="5">
    <location>
        <begin position="299"/>
        <end position="308"/>
    </location>
</feature>
<feature type="transmembrane region" description="Helical" evidence="1">
    <location>
        <begin position="309"/>
        <end position="331"/>
    </location>
</feature>
<feature type="topological domain" description="Cytoplasmic" evidence="5">
    <location>
        <begin position="332"/>
        <end position="423"/>
    </location>
</feature>
<feature type="transmembrane region" description="Helical" evidence="1">
    <location>
        <begin position="424"/>
        <end position="446"/>
    </location>
</feature>
<feature type="topological domain" description="Extracellular" evidence="5">
    <location>
        <begin position="447"/>
        <end position="449"/>
    </location>
</feature>
<feature type="modified residue" description="Phosphoserine" evidence="7">
    <location>
        <position position="390"/>
    </location>
</feature>
<feature type="glycosylation site" description="N-linked (GlcNAc...) asparagine" evidence="2">
    <location>
        <position position="103"/>
    </location>
</feature>
<feature type="glycosylation site" description="N-linked (GlcNAc...) asparagine" evidence="2">
    <location>
        <position position="106"/>
    </location>
</feature>
<feature type="disulfide bond" evidence="1">
    <location>
        <begin position="164"/>
        <end position="178"/>
    </location>
</feature>
<reference key="1">
    <citation type="journal article" date="1989" name="Neuron">
        <title>Two novel GABAA receptor subunits exist in distinct neuronal subpopulations.</title>
        <authorList>
            <person name="Shivers B.D."/>
            <person name="Killisch I."/>
            <person name="Sprengel R."/>
            <person name="Sontheimer H."/>
            <person name="Koehler M."/>
            <person name="Schofield P.R."/>
            <person name="Seeburg P.H."/>
        </authorList>
    </citation>
    <scope>NUCLEOTIDE SEQUENCE</scope>
    <source>
        <tissue>Brain</tissue>
    </source>
</reference>
<reference key="2">
    <citation type="journal article" date="1990" name="Biochem. Biophys. Res. Commun.">
        <title>Isolation of distantly related members in a multigene family using the polymerase chain reaction technique.</title>
        <authorList>
            <person name="Zhao Z.Y."/>
            <person name="Joho R.H."/>
        </authorList>
    </citation>
    <scope>NUCLEOTIDE SEQUENCE</scope>
    <source>
        <tissue>Brain</tissue>
    </source>
</reference>
<reference key="3">
    <citation type="journal article" date="1990" name="Biochem. Biophys. Res. Commun.">
        <authorList>
            <person name="Zhao Z.Y."/>
            <person name="Joho R.H."/>
        </authorList>
    </citation>
    <scope>ERRATUM OF PUBMED:1690000</scope>
</reference>
<reference key="4">
    <citation type="journal article" date="2004" name="Genome Res.">
        <title>The status, quality, and expansion of the NIH full-length cDNA project: the Mammalian Gene Collection (MGC).</title>
        <authorList>
            <consortium name="The MGC Project Team"/>
        </authorList>
    </citation>
    <scope>NUCLEOTIDE SEQUENCE [LARGE SCALE MRNA]</scope>
    <source>
        <tissue>Brain</tissue>
    </source>
</reference>
<reference key="5">
    <citation type="journal article" date="1994" name="J. Biol. Chem.">
        <title>BSF1, a novel brain-specific DNA-binding protein recognizing a tandemly repeated purine DNA element in the GABAA receptor delta subunit gene.</title>
        <authorList>
            <person name="Motejlek K."/>
            <person name="Hauselmann R."/>
            <person name="Leitgeb S."/>
            <person name="Luescher B."/>
        </authorList>
    </citation>
    <scope>NUCLEOTIDE SEQUENCE OF 1-22</scope>
    <source>
        <strain>Sprague-Dawley</strain>
        <tissue>Testis</tissue>
    </source>
</reference>
<reference key="6">
    <citation type="journal article" date="1998" name="J. Neurosci.">
        <title>Segregation of different GABAA receptors to synaptic and extrasynaptic membranes of cerebellar granule cells.</title>
        <authorList>
            <person name="Nusser Z."/>
            <person name="Sieghart W."/>
            <person name="Somogyi P."/>
        </authorList>
    </citation>
    <scope>FUNCTION</scope>
    <scope>SUBCELLULAR LOCATION</scope>
    <scope>TISSUE SPECIFICITY</scope>
</reference>
<reference key="7">
    <citation type="journal article" date="2006" name="J. Biol. Chem.">
        <title>A novel function of ionotropic gamma-aminobutyric acid receptors involving alveolar fluid homeostasis.</title>
        <authorList>
            <person name="Jin N."/>
            <person name="Kolliputi N."/>
            <person name="Gou D."/>
            <person name="Weng T."/>
            <person name="Liu L."/>
        </authorList>
    </citation>
    <scope>TISSUE SPECIFICITY</scope>
</reference>
<reference key="8">
    <citation type="journal article" date="2012" name="Nat. Commun.">
        <title>Quantitative maps of protein phosphorylation sites across 14 different rat organs and tissues.</title>
        <authorList>
            <person name="Lundby A."/>
            <person name="Secher A."/>
            <person name="Lage K."/>
            <person name="Nordsborg N.B."/>
            <person name="Dmytriyev A."/>
            <person name="Lundby C."/>
            <person name="Olsen J.V."/>
        </authorList>
    </citation>
    <scope>PHOSPHORYLATION [LARGE SCALE ANALYSIS] AT SER-390</scope>
    <scope>IDENTIFICATION BY MASS SPECTROMETRY [LARGE SCALE ANALYSIS]</scope>
</reference>